<dbReference type="EC" id="3.1.3.11" evidence="1"/>
<dbReference type="EMBL" id="CP000469">
    <property type="protein sequence ID" value="ABK46886.1"/>
    <property type="molecule type" value="Genomic_DNA"/>
</dbReference>
<dbReference type="RefSeq" id="WP_011715829.1">
    <property type="nucleotide sequence ID" value="NC_008577.1"/>
</dbReference>
<dbReference type="SMR" id="A0KSW7"/>
<dbReference type="STRING" id="94122.Shewana3_0648"/>
<dbReference type="KEGG" id="shn:Shewana3_0648"/>
<dbReference type="eggNOG" id="COG0158">
    <property type="taxonomic scope" value="Bacteria"/>
</dbReference>
<dbReference type="HOGENOM" id="CLU_039977_0_0_6"/>
<dbReference type="OrthoDB" id="9806756at2"/>
<dbReference type="UniPathway" id="UPA00138"/>
<dbReference type="Proteomes" id="UP000002589">
    <property type="component" value="Chromosome"/>
</dbReference>
<dbReference type="GO" id="GO:0005829">
    <property type="term" value="C:cytosol"/>
    <property type="evidence" value="ECO:0007669"/>
    <property type="project" value="TreeGrafter"/>
</dbReference>
<dbReference type="GO" id="GO:0042132">
    <property type="term" value="F:fructose 1,6-bisphosphate 1-phosphatase activity"/>
    <property type="evidence" value="ECO:0007669"/>
    <property type="project" value="UniProtKB-UniRule"/>
</dbReference>
<dbReference type="GO" id="GO:0000287">
    <property type="term" value="F:magnesium ion binding"/>
    <property type="evidence" value="ECO:0007669"/>
    <property type="project" value="UniProtKB-UniRule"/>
</dbReference>
<dbReference type="GO" id="GO:0030388">
    <property type="term" value="P:fructose 1,6-bisphosphate metabolic process"/>
    <property type="evidence" value="ECO:0007669"/>
    <property type="project" value="TreeGrafter"/>
</dbReference>
<dbReference type="GO" id="GO:0006002">
    <property type="term" value="P:fructose 6-phosphate metabolic process"/>
    <property type="evidence" value="ECO:0007669"/>
    <property type="project" value="TreeGrafter"/>
</dbReference>
<dbReference type="GO" id="GO:0006000">
    <property type="term" value="P:fructose metabolic process"/>
    <property type="evidence" value="ECO:0007669"/>
    <property type="project" value="TreeGrafter"/>
</dbReference>
<dbReference type="GO" id="GO:0006094">
    <property type="term" value="P:gluconeogenesis"/>
    <property type="evidence" value="ECO:0007669"/>
    <property type="project" value="UniProtKB-UniRule"/>
</dbReference>
<dbReference type="GO" id="GO:0005986">
    <property type="term" value="P:sucrose biosynthetic process"/>
    <property type="evidence" value="ECO:0007669"/>
    <property type="project" value="TreeGrafter"/>
</dbReference>
<dbReference type="CDD" id="cd00354">
    <property type="entry name" value="FBPase"/>
    <property type="match status" value="1"/>
</dbReference>
<dbReference type="FunFam" id="3.30.540.10:FF:000006">
    <property type="entry name" value="Fructose-1,6-bisphosphatase class 1"/>
    <property type="match status" value="1"/>
</dbReference>
<dbReference type="FunFam" id="3.40.190.80:FF:000011">
    <property type="entry name" value="Fructose-1,6-bisphosphatase class 1"/>
    <property type="match status" value="1"/>
</dbReference>
<dbReference type="Gene3D" id="3.40.190.80">
    <property type="match status" value="1"/>
</dbReference>
<dbReference type="Gene3D" id="3.30.540.10">
    <property type="entry name" value="Fructose-1,6-Bisphosphatase, subunit A, domain 1"/>
    <property type="match status" value="1"/>
</dbReference>
<dbReference type="HAMAP" id="MF_01855">
    <property type="entry name" value="FBPase_class1"/>
    <property type="match status" value="1"/>
</dbReference>
<dbReference type="InterPro" id="IPR044015">
    <property type="entry name" value="FBPase_C_dom"/>
</dbReference>
<dbReference type="InterPro" id="IPR000146">
    <property type="entry name" value="FBPase_class-1"/>
</dbReference>
<dbReference type="InterPro" id="IPR033391">
    <property type="entry name" value="FBPase_N"/>
</dbReference>
<dbReference type="InterPro" id="IPR028343">
    <property type="entry name" value="FBPtase"/>
</dbReference>
<dbReference type="NCBIfam" id="NF006779">
    <property type="entry name" value="PRK09293.1-3"/>
    <property type="match status" value="1"/>
</dbReference>
<dbReference type="NCBIfam" id="NF006780">
    <property type="entry name" value="PRK09293.1-4"/>
    <property type="match status" value="1"/>
</dbReference>
<dbReference type="PANTHER" id="PTHR11556">
    <property type="entry name" value="FRUCTOSE-1,6-BISPHOSPHATASE-RELATED"/>
    <property type="match status" value="1"/>
</dbReference>
<dbReference type="PANTHER" id="PTHR11556:SF35">
    <property type="entry name" value="SEDOHEPTULOSE-1,7-BISPHOSPHATASE, CHLOROPLASTIC"/>
    <property type="match status" value="1"/>
</dbReference>
<dbReference type="Pfam" id="PF00316">
    <property type="entry name" value="FBPase"/>
    <property type="match status" value="1"/>
</dbReference>
<dbReference type="Pfam" id="PF18913">
    <property type="entry name" value="FBPase_C"/>
    <property type="match status" value="1"/>
</dbReference>
<dbReference type="PIRSF" id="PIRSF500210">
    <property type="entry name" value="FBPtase"/>
    <property type="match status" value="1"/>
</dbReference>
<dbReference type="PIRSF" id="PIRSF000904">
    <property type="entry name" value="FBPtase_SBPase"/>
    <property type="match status" value="1"/>
</dbReference>
<dbReference type="PRINTS" id="PR00115">
    <property type="entry name" value="F16BPHPHTASE"/>
</dbReference>
<dbReference type="SUPFAM" id="SSF56655">
    <property type="entry name" value="Carbohydrate phosphatase"/>
    <property type="match status" value="1"/>
</dbReference>
<protein>
    <recommendedName>
        <fullName evidence="1">Fructose-1,6-bisphosphatase class 1</fullName>
        <shortName evidence="1">FBPase class 1</shortName>
        <ecNumber evidence="1">3.1.3.11</ecNumber>
    </recommendedName>
    <alternativeName>
        <fullName evidence="1">D-fructose-1,6-bisphosphate 1-phosphohydrolase class 1</fullName>
    </alternativeName>
</protein>
<accession>A0KSW7</accession>
<organism>
    <name type="scientific">Shewanella sp. (strain ANA-3)</name>
    <dbReference type="NCBI Taxonomy" id="94122"/>
    <lineage>
        <taxon>Bacteria</taxon>
        <taxon>Pseudomonadati</taxon>
        <taxon>Pseudomonadota</taxon>
        <taxon>Gammaproteobacteria</taxon>
        <taxon>Alteromonadales</taxon>
        <taxon>Shewanellaceae</taxon>
        <taxon>Shewanella</taxon>
    </lineage>
</organism>
<evidence type="ECO:0000255" key="1">
    <source>
        <dbReference type="HAMAP-Rule" id="MF_01855"/>
    </source>
</evidence>
<gene>
    <name evidence="1" type="primary">fbp</name>
    <name type="ordered locus">Shewana3_0648</name>
</gene>
<comment type="catalytic activity">
    <reaction evidence="1">
        <text>beta-D-fructose 1,6-bisphosphate + H2O = beta-D-fructose 6-phosphate + phosphate</text>
        <dbReference type="Rhea" id="RHEA:11064"/>
        <dbReference type="ChEBI" id="CHEBI:15377"/>
        <dbReference type="ChEBI" id="CHEBI:32966"/>
        <dbReference type="ChEBI" id="CHEBI:43474"/>
        <dbReference type="ChEBI" id="CHEBI:57634"/>
        <dbReference type="EC" id="3.1.3.11"/>
    </reaction>
</comment>
<comment type="cofactor">
    <cofactor evidence="1">
        <name>Mg(2+)</name>
        <dbReference type="ChEBI" id="CHEBI:18420"/>
    </cofactor>
    <text evidence="1">Binds 2 magnesium ions per subunit.</text>
</comment>
<comment type="pathway">
    <text evidence="1">Carbohydrate biosynthesis; gluconeogenesis.</text>
</comment>
<comment type="subunit">
    <text evidence="1">Homotetramer.</text>
</comment>
<comment type="subcellular location">
    <subcellularLocation>
        <location evidence="1">Cytoplasm</location>
    </subcellularLocation>
</comment>
<comment type="similarity">
    <text evidence="1">Belongs to the FBPase class 1 family.</text>
</comment>
<proteinExistence type="inferred from homology"/>
<reference key="1">
    <citation type="submission" date="2006-09" db="EMBL/GenBank/DDBJ databases">
        <title>Complete sequence of chromosome 1 of Shewanella sp. ANA-3.</title>
        <authorList>
            <person name="Copeland A."/>
            <person name="Lucas S."/>
            <person name="Lapidus A."/>
            <person name="Barry K."/>
            <person name="Detter J.C."/>
            <person name="Glavina del Rio T."/>
            <person name="Hammon N."/>
            <person name="Israni S."/>
            <person name="Dalin E."/>
            <person name="Tice H."/>
            <person name="Pitluck S."/>
            <person name="Chertkov O."/>
            <person name="Brettin T."/>
            <person name="Bruce D."/>
            <person name="Han C."/>
            <person name="Tapia R."/>
            <person name="Gilna P."/>
            <person name="Schmutz J."/>
            <person name="Larimer F."/>
            <person name="Land M."/>
            <person name="Hauser L."/>
            <person name="Kyrpides N."/>
            <person name="Kim E."/>
            <person name="Newman D."/>
            <person name="Salticov C."/>
            <person name="Konstantinidis K."/>
            <person name="Klappenback J."/>
            <person name="Tiedje J."/>
            <person name="Richardson P."/>
        </authorList>
    </citation>
    <scope>NUCLEOTIDE SEQUENCE [LARGE SCALE GENOMIC DNA]</scope>
    <source>
        <strain>ANA-3</strain>
    </source>
</reference>
<name>F16PA_SHESA</name>
<sequence>MQTLAQHLTSKAVNESLSQLILTLADTSKAISHAVRHGALAGVLGATEQENVQGETQKKLDIITNDMLKDALKADGTVRGLASEEEDHVVEVCANGQYLVCFDPLDGSSNIDINSLVGTIFSVLPAPQGELTETSFLQSGRNQLAAGYVLYGPSTMLALTTGQGVQLFTLHPETNEFLLTNAAMSISPDTQEFAINMSNQRFWEAPMQTYIADLLLGKIGPREKSFNMRWIAAMVGDVHRVLSRGGIFTYPTDNKDPKKPYKLRLMYEANPMALLVEQAGGKASTGYETILDIQPTQIHQRVAVILGSANEVDACLSYHGLDYSEEPSLD</sequence>
<feature type="chain" id="PRO_0000364711" description="Fructose-1,6-bisphosphatase class 1">
    <location>
        <begin position="1"/>
        <end position="330"/>
    </location>
</feature>
<feature type="binding site" evidence="1">
    <location>
        <position position="84"/>
    </location>
    <ligand>
        <name>Mg(2+)</name>
        <dbReference type="ChEBI" id="CHEBI:18420"/>
        <label>1</label>
    </ligand>
</feature>
<feature type="binding site" evidence="1">
    <location>
        <position position="103"/>
    </location>
    <ligand>
        <name>Mg(2+)</name>
        <dbReference type="ChEBI" id="CHEBI:18420"/>
        <label>1</label>
    </ligand>
</feature>
<feature type="binding site" evidence="1">
    <location>
        <position position="103"/>
    </location>
    <ligand>
        <name>Mg(2+)</name>
        <dbReference type="ChEBI" id="CHEBI:18420"/>
        <label>2</label>
    </ligand>
</feature>
<feature type="binding site" evidence="1">
    <location>
        <position position="105"/>
    </location>
    <ligand>
        <name>Mg(2+)</name>
        <dbReference type="ChEBI" id="CHEBI:18420"/>
        <label>1</label>
    </ligand>
</feature>
<feature type="binding site" evidence="1">
    <location>
        <begin position="106"/>
        <end position="109"/>
    </location>
    <ligand>
        <name>substrate</name>
    </ligand>
</feature>
<feature type="binding site" evidence="1">
    <location>
        <position position="106"/>
    </location>
    <ligand>
        <name>Mg(2+)</name>
        <dbReference type="ChEBI" id="CHEBI:18420"/>
        <label>2</label>
    </ligand>
</feature>
<feature type="binding site" evidence="1">
    <location>
        <position position="196"/>
    </location>
    <ligand>
        <name>substrate</name>
    </ligand>
</feature>
<feature type="binding site" evidence="1">
    <location>
        <position position="262"/>
    </location>
    <ligand>
        <name>substrate</name>
    </ligand>
</feature>
<feature type="binding site" evidence="1">
    <location>
        <position position="268"/>
    </location>
    <ligand>
        <name>Mg(2+)</name>
        <dbReference type="ChEBI" id="CHEBI:18420"/>
        <label>2</label>
    </ligand>
</feature>
<keyword id="KW-0119">Carbohydrate metabolism</keyword>
<keyword id="KW-0963">Cytoplasm</keyword>
<keyword id="KW-0378">Hydrolase</keyword>
<keyword id="KW-0460">Magnesium</keyword>
<keyword id="KW-0479">Metal-binding</keyword>